<name>GDX_PROVU</name>
<dbReference type="EMBL" id="X06151">
    <property type="protein sequence ID" value="CAA29512.1"/>
    <property type="molecule type" value="Genomic_DNA"/>
</dbReference>
<dbReference type="PIR" id="S00120">
    <property type="entry name" value="S00120"/>
</dbReference>
<dbReference type="SMR" id="P20928"/>
<dbReference type="STRING" id="585.DR95_2062"/>
<dbReference type="eggNOG" id="COG2076">
    <property type="taxonomic scope" value="Bacteria"/>
</dbReference>
<dbReference type="GO" id="GO:0005886">
    <property type="term" value="C:plasma membrane"/>
    <property type="evidence" value="ECO:0007669"/>
    <property type="project" value="UniProtKB-SubCell"/>
</dbReference>
<dbReference type="GO" id="GO:0022857">
    <property type="term" value="F:transmembrane transporter activity"/>
    <property type="evidence" value="ECO:0007669"/>
    <property type="project" value="InterPro"/>
</dbReference>
<dbReference type="GO" id="GO:0006811">
    <property type="term" value="P:monoatomic ion transport"/>
    <property type="evidence" value="ECO:0007669"/>
    <property type="project" value="UniProtKB-KW"/>
</dbReference>
<dbReference type="FunFam" id="1.10.3730.20:FF:000001">
    <property type="entry name" value="Quaternary ammonium compound resistance transporter SugE"/>
    <property type="match status" value="1"/>
</dbReference>
<dbReference type="Gene3D" id="1.10.3730.20">
    <property type="match status" value="1"/>
</dbReference>
<dbReference type="InterPro" id="IPR000390">
    <property type="entry name" value="Small_drug/metabolite_transptr"/>
</dbReference>
<dbReference type="InterPro" id="IPR045324">
    <property type="entry name" value="Small_multidrug_res"/>
</dbReference>
<dbReference type="NCBIfam" id="NF008512">
    <property type="entry name" value="PRK11431.1"/>
    <property type="match status" value="1"/>
</dbReference>
<dbReference type="PANTHER" id="PTHR30561:SF0">
    <property type="entry name" value="GUANIDINIUM EXPORTER"/>
    <property type="match status" value="1"/>
</dbReference>
<dbReference type="PANTHER" id="PTHR30561">
    <property type="entry name" value="SMR FAMILY PROTON-DEPENDENT DRUG EFFLUX TRANSPORTER SUGE"/>
    <property type="match status" value="1"/>
</dbReference>
<dbReference type="Pfam" id="PF00893">
    <property type="entry name" value="Multi_Drug_Res"/>
    <property type="match status" value="1"/>
</dbReference>
<dbReference type="SUPFAM" id="SSF103481">
    <property type="entry name" value="Multidrug resistance efflux transporter EmrE"/>
    <property type="match status" value="1"/>
</dbReference>
<keyword id="KW-0997">Cell inner membrane</keyword>
<keyword id="KW-1003">Cell membrane</keyword>
<keyword id="KW-0406">Ion transport</keyword>
<keyword id="KW-0472">Membrane</keyword>
<keyword id="KW-0812">Transmembrane</keyword>
<keyword id="KW-1133">Transmembrane helix</keyword>
<keyword id="KW-0813">Transport</keyword>
<accession>P20928</accession>
<gene>
    <name evidence="1" type="primary">gdx</name>
    <name type="synonym">sugE</name>
</gene>
<proteinExistence type="inferred from homology"/>
<sequence length="104" mass="11014">MSWIILFVAGLLEIVWAVGLKYTHGFTRLTPSIITISAMIVSMGMLSYAMKGLPAGTAYAIWTGIGAVGTAIFGIIVFGESANIYRLLSLAMIVFGIIGLKLAS</sequence>
<evidence type="ECO:0000250" key="1">
    <source>
        <dbReference type="UniProtKB" id="P69937"/>
    </source>
</evidence>
<evidence type="ECO:0000255" key="2"/>
<evidence type="ECO:0000305" key="3"/>
<protein>
    <recommendedName>
        <fullName evidence="1">Guanidinium exporter</fullName>
    </recommendedName>
</protein>
<reference key="1">
    <citation type="journal article" date="1987" name="Eur. J. Biochem.">
        <title>Nucleotide sequence and comparative analysis of the frd operon encoding the fumarate reductase of Proteus vulgaris. Extensive sequence divergence of the membrane anchors and absence of an frd-linked ampC cephalosporinase gene.</title>
        <authorList>
            <person name="Cole S.T."/>
        </authorList>
    </citation>
    <scope>NUCLEOTIDE SEQUENCE [GENOMIC DNA]</scope>
</reference>
<comment type="function">
    <text evidence="1">Guanidinium ion exporter. Couples guanidinium export to the proton motive force, exchanging one guanidinium ion for two protons.</text>
</comment>
<comment type="subcellular location">
    <subcellularLocation>
        <location evidence="1">Cell inner membrane</location>
        <topology evidence="1">Multi-pass membrane protein</topology>
    </subcellularLocation>
</comment>
<comment type="similarity">
    <text evidence="3">Belongs to the drug/metabolite transporter (DMT) superfamily. Small multidrug resistance (SMR) (TC 2.A.7.1) family. Gdx/SugE subfamily.</text>
</comment>
<organism>
    <name type="scientific">Proteus vulgaris</name>
    <dbReference type="NCBI Taxonomy" id="585"/>
    <lineage>
        <taxon>Bacteria</taxon>
        <taxon>Pseudomonadati</taxon>
        <taxon>Pseudomonadota</taxon>
        <taxon>Gammaproteobacteria</taxon>
        <taxon>Enterobacterales</taxon>
        <taxon>Morganellaceae</taxon>
        <taxon>Proteus</taxon>
    </lineage>
</organism>
<feature type="chain" id="PRO_0000108101" description="Guanidinium exporter">
    <location>
        <begin position="1"/>
        <end position="104"/>
    </location>
</feature>
<feature type="topological domain" description="Cytoplasmic" evidence="2">
    <location>
        <begin position="1"/>
        <end position="3"/>
    </location>
</feature>
<feature type="transmembrane region" description="Helical" evidence="2">
    <location>
        <begin position="4"/>
        <end position="26"/>
    </location>
</feature>
<feature type="topological domain" description="Periplasmic" evidence="2">
    <location>
        <begin position="27"/>
        <end position="32"/>
    </location>
</feature>
<feature type="transmembrane region" description="Helical" evidence="2">
    <location>
        <begin position="33"/>
        <end position="50"/>
    </location>
</feature>
<feature type="topological domain" description="Cytoplasmic" evidence="2">
    <location>
        <begin position="51"/>
        <end position="54"/>
    </location>
</feature>
<feature type="transmembrane region" description="Helical" evidence="2">
    <location>
        <begin position="55"/>
        <end position="77"/>
    </location>
</feature>
<feature type="topological domain" description="Periplasmic" evidence="2">
    <location>
        <begin position="78"/>
        <end position="83"/>
    </location>
</feature>
<feature type="transmembrane region" description="Helical" evidence="2">
    <location>
        <begin position="84"/>
        <end position="103"/>
    </location>
</feature>
<feature type="topological domain" description="Cytoplasmic" evidence="2">
    <location>
        <position position="104"/>
    </location>
</feature>